<proteinExistence type="inferred from homology"/>
<organism>
    <name type="scientific">Neurospora crassa (strain ATCC 24698 / 74-OR23-1A / CBS 708.71 / DSM 1257 / FGSC 987)</name>
    <dbReference type="NCBI Taxonomy" id="367110"/>
    <lineage>
        <taxon>Eukaryota</taxon>
        <taxon>Fungi</taxon>
        <taxon>Dikarya</taxon>
        <taxon>Ascomycota</taxon>
        <taxon>Pezizomycotina</taxon>
        <taxon>Sordariomycetes</taxon>
        <taxon>Sordariomycetidae</taxon>
        <taxon>Sordariales</taxon>
        <taxon>Sordariaceae</taxon>
        <taxon>Neurospora</taxon>
    </lineage>
</organism>
<comment type="function">
    <text evidence="1">Catalyzes the hydroxylation of the N(6)-(4-aminobutyl)-L-lysine intermediate to form hypusine, an essential post-translational modification only found in mature eIF-5A factor.</text>
</comment>
<comment type="catalytic activity">
    <reaction evidence="1">
        <text>[eIF5A protein]-deoxyhypusine + AH2 + O2 = [eIF5A protein]-hypusine + A + H2O</text>
        <dbReference type="Rhea" id="RHEA:14101"/>
        <dbReference type="Rhea" id="RHEA-COMP:10144"/>
        <dbReference type="Rhea" id="RHEA-COMP:12592"/>
        <dbReference type="ChEBI" id="CHEBI:13193"/>
        <dbReference type="ChEBI" id="CHEBI:15377"/>
        <dbReference type="ChEBI" id="CHEBI:15379"/>
        <dbReference type="ChEBI" id="CHEBI:17499"/>
        <dbReference type="ChEBI" id="CHEBI:82657"/>
        <dbReference type="ChEBI" id="CHEBI:91175"/>
        <dbReference type="EC" id="1.14.99.29"/>
    </reaction>
</comment>
<comment type="cofactor">
    <cofactor evidence="1">
        <name>Fe(2+)</name>
        <dbReference type="ChEBI" id="CHEBI:29033"/>
    </cofactor>
    <text evidence="1">Binds 2 Fe(2+) ions per subunit.</text>
</comment>
<comment type="pathway">
    <text evidence="1">Protein modification; eIF5A hypusination.</text>
</comment>
<comment type="subcellular location">
    <subcellularLocation>
        <location evidence="1">Cytoplasm</location>
    </subcellularLocation>
    <subcellularLocation>
        <location evidence="1">Nucleus</location>
    </subcellularLocation>
</comment>
<comment type="similarity">
    <text evidence="1">Belongs to the deoxyhypusine hydroxylase family.</text>
</comment>
<accession>Q7S891</accession>
<sequence>MSATIASLRESLCSETTPLPIRFRALFSLKHLAVQNKGTADSLSAIDAIAAAFASPSALLKHELAYCLGQTGSDAAIPHLTQVLEDLQEDPMCRHEAAEALGALGKAESLGVLQKYLHREGEDVSVKETCEIAIDRIEWENSEERKQEKLRQSDFASVDPAPPMPEDDEKQTVETLEKKLLDTSLPLFKRYRAMFALRDLASPPDLPTAVPAILALAKGLKDESALFRHEIAFVFGQLSHPASIPALTEALSNLDEVSMVRHEAAEALGSLGDEEGVEETLLKFLHDKEKVVRESVIVALDMAEFEQSGQAEYALIPEVASKAS</sequence>
<reference key="1">
    <citation type="journal article" date="2003" name="Nature">
        <title>The genome sequence of the filamentous fungus Neurospora crassa.</title>
        <authorList>
            <person name="Galagan J.E."/>
            <person name="Calvo S.E."/>
            <person name="Borkovich K.A."/>
            <person name="Selker E.U."/>
            <person name="Read N.D."/>
            <person name="Jaffe D.B."/>
            <person name="FitzHugh W."/>
            <person name="Ma L.-J."/>
            <person name="Smirnov S."/>
            <person name="Purcell S."/>
            <person name="Rehman B."/>
            <person name="Elkins T."/>
            <person name="Engels R."/>
            <person name="Wang S."/>
            <person name="Nielsen C.B."/>
            <person name="Butler J."/>
            <person name="Endrizzi M."/>
            <person name="Qui D."/>
            <person name="Ianakiev P."/>
            <person name="Bell-Pedersen D."/>
            <person name="Nelson M.A."/>
            <person name="Werner-Washburne M."/>
            <person name="Selitrennikoff C.P."/>
            <person name="Kinsey J.A."/>
            <person name="Braun E.L."/>
            <person name="Zelter A."/>
            <person name="Schulte U."/>
            <person name="Kothe G.O."/>
            <person name="Jedd G."/>
            <person name="Mewes H.-W."/>
            <person name="Staben C."/>
            <person name="Marcotte E."/>
            <person name="Greenberg D."/>
            <person name="Roy A."/>
            <person name="Foley K."/>
            <person name="Naylor J."/>
            <person name="Stange-Thomann N."/>
            <person name="Barrett R."/>
            <person name="Gnerre S."/>
            <person name="Kamal M."/>
            <person name="Kamvysselis M."/>
            <person name="Mauceli E.W."/>
            <person name="Bielke C."/>
            <person name="Rudd S."/>
            <person name="Frishman D."/>
            <person name="Krystofova S."/>
            <person name="Rasmussen C."/>
            <person name="Metzenberg R.L."/>
            <person name="Perkins D.D."/>
            <person name="Kroken S."/>
            <person name="Cogoni C."/>
            <person name="Macino G."/>
            <person name="Catcheside D.E.A."/>
            <person name="Li W."/>
            <person name="Pratt R.J."/>
            <person name="Osmani S.A."/>
            <person name="DeSouza C.P.C."/>
            <person name="Glass N.L."/>
            <person name="Orbach M.J."/>
            <person name="Berglund J.A."/>
            <person name="Voelker R."/>
            <person name="Yarden O."/>
            <person name="Plamann M."/>
            <person name="Seiler S."/>
            <person name="Dunlap J.C."/>
            <person name="Radford A."/>
            <person name="Aramayo R."/>
            <person name="Natvig D.O."/>
            <person name="Alex L.A."/>
            <person name="Mannhaupt G."/>
            <person name="Ebbole D.J."/>
            <person name="Freitag M."/>
            <person name="Paulsen I."/>
            <person name="Sachs M.S."/>
            <person name="Lander E.S."/>
            <person name="Nusbaum C."/>
            <person name="Birren B.W."/>
        </authorList>
    </citation>
    <scope>NUCLEOTIDE SEQUENCE [LARGE SCALE GENOMIC DNA]</scope>
    <source>
        <strain>ATCC 24698 / 74-OR23-1A / CBS 708.71 / DSM 1257 / FGSC 987</strain>
    </source>
</reference>
<gene>
    <name type="primary">lia1</name>
    <name type="ORF">NCU05252</name>
</gene>
<feature type="chain" id="PRO_0000283670" description="Deoxyhypusine hydroxylase">
    <location>
        <begin position="1"/>
        <end position="324"/>
    </location>
</feature>
<feature type="repeat" description="HEAT-like PBS-type 1">
    <location>
        <begin position="60"/>
        <end position="86"/>
    </location>
</feature>
<feature type="repeat" description="HEAT-like PBS-type 2">
    <location>
        <begin position="94"/>
        <end position="119"/>
    </location>
</feature>
<feature type="repeat" description="HEAT-like PBS-type 3">
    <location>
        <begin position="189"/>
        <end position="219"/>
    </location>
</feature>
<feature type="repeat" description="HEAT-like PBS-type 4">
    <location>
        <begin position="227"/>
        <end position="253"/>
    </location>
</feature>
<feature type="repeat" description="HEAT-like PBS-type 5">
    <location>
        <begin position="260"/>
        <end position="287"/>
    </location>
</feature>
<feature type="region of interest" description="Disordered" evidence="2">
    <location>
        <begin position="143"/>
        <end position="171"/>
    </location>
</feature>
<feature type="compositionally biased region" description="Basic and acidic residues" evidence="2">
    <location>
        <begin position="143"/>
        <end position="152"/>
    </location>
</feature>
<feature type="binding site" evidence="1">
    <location>
        <position position="62"/>
    </location>
    <ligand>
        <name>Fe cation</name>
        <dbReference type="ChEBI" id="CHEBI:24875"/>
        <label>1</label>
    </ligand>
</feature>
<feature type="binding site" evidence="1">
    <location>
        <position position="63"/>
    </location>
    <ligand>
        <name>Fe cation</name>
        <dbReference type="ChEBI" id="CHEBI:24875"/>
        <label>1</label>
    </ligand>
</feature>
<feature type="binding site" evidence="1">
    <location>
        <position position="95"/>
    </location>
    <ligand>
        <name>Fe cation</name>
        <dbReference type="ChEBI" id="CHEBI:24875"/>
        <label>1</label>
    </ligand>
</feature>
<feature type="binding site" evidence="1">
    <location>
        <position position="96"/>
    </location>
    <ligand>
        <name>Fe cation</name>
        <dbReference type="ChEBI" id="CHEBI:24875"/>
        <label>1</label>
    </ligand>
</feature>
<feature type="binding site" evidence="1">
    <location>
        <position position="229"/>
    </location>
    <ligand>
        <name>Fe cation</name>
        <dbReference type="ChEBI" id="CHEBI:24875"/>
        <label>2</label>
    </ligand>
</feature>
<feature type="binding site" evidence="1">
    <location>
        <position position="230"/>
    </location>
    <ligand>
        <name>Fe cation</name>
        <dbReference type="ChEBI" id="CHEBI:24875"/>
        <label>2</label>
    </ligand>
</feature>
<feature type="binding site" evidence="1">
    <location>
        <position position="262"/>
    </location>
    <ligand>
        <name>Fe cation</name>
        <dbReference type="ChEBI" id="CHEBI:24875"/>
        <label>2</label>
    </ligand>
</feature>
<feature type="binding site" evidence="1">
    <location>
        <position position="263"/>
    </location>
    <ligand>
        <name>Fe cation</name>
        <dbReference type="ChEBI" id="CHEBI:24875"/>
        <label>2</label>
    </ligand>
</feature>
<evidence type="ECO:0000255" key="1">
    <source>
        <dbReference type="HAMAP-Rule" id="MF_03101"/>
    </source>
</evidence>
<evidence type="ECO:0000256" key="2">
    <source>
        <dbReference type="SAM" id="MobiDB-lite"/>
    </source>
</evidence>
<name>DOHH_NEUCR</name>
<protein>
    <recommendedName>
        <fullName evidence="1">Deoxyhypusine hydroxylase</fullName>
        <shortName evidence="1">DOHH</shortName>
        <ecNumber evidence="1">1.14.99.29</ecNumber>
    </recommendedName>
    <alternativeName>
        <fullName evidence="1">Deoxyhypusine dioxygenase</fullName>
    </alternativeName>
    <alternativeName>
        <fullName evidence="1">Deoxyhypusine monooxygenase</fullName>
    </alternativeName>
</protein>
<keyword id="KW-0963">Cytoplasm</keyword>
<keyword id="KW-0386">Hypusine biosynthesis</keyword>
<keyword id="KW-0408">Iron</keyword>
<keyword id="KW-0479">Metal-binding</keyword>
<keyword id="KW-0503">Monooxygenase</keyword>
<keyword id="KW-0539">Nucleus</keyword>
<keyword id="KW-0560">Oxidoreductase</keyword>
<keyword id="KW-1185">Reference proteome</keyword>
<keyword id="KW-0677">Repeat</keyword>
<dbReference type="EC" id="1.14.99.29" evidence="1"/>
<dbReference type="EMBL" id="CM002239">
    <property type="protein sequence ID" value="EAA32553.1"/>
    <property type="molecule type" value="Genomic_DNA"/>
</dbReference>
<dbReference type="RefSeq" id="XP_961789.1">
    <property type="nucleotide sequence ID" value="XM_956696.2"/>
</dbReference>
<dbReference type="SMR" id="Q7S891"/>
<dbReference type="FunCoup" id="Q7S891">
    <property type="interactions" value="871"/>
</dbReference>
<dbReference type="STRING" id="367110.Q7S891"/>
<dbReference type="PaxDb" id="5141-EFNCRP00000005062"/>
<dbReference type="EnsemblFungi" id="EAA32553">
    <property type="protein sequence ID" value="EAA32553"/>
    <property type="gene ID" value="NCU05252"/>
</dbReference>
<dbReference type="GeneID" id="3877937"/>
<dbReference type="KEGG" id="ncr:NCU05252"/>
<dbReference type="VEuPathDB" id="FungiDB:NCU05252"/>
<dbReference type="HOGENOM" id="CLU_053974_0_0_1"/>
<dbReference type="InParanoid" id="Q7S891"/>
<dbReference type="OMA" id="LQEPCSI"/>
<dbReference type="OrthoDB" id="421002at2759"/>
<dbReference type="UniPathway" id="UPA00354"/>
<dbReference type="Proteomes" id="UP000001805">
    <property type="component" value="Chromosome 4, Linkage Group IV"/>
</dbReference>
<dbReference type="GO" id="GO:0005737">
    <property type="term" value="C:cytoplasm"/>
    <property type="evidence" value="ECO:0007669"/>
    <property type="project" value="UniProtKB-SubCell"/>
</dbReference>
<dbReference type="GO" id="GO:0005634">
    <property type="term" value="C:nucleus"/>
    <property type="evidence" value="ECO:0007669"/>
    <property type="project" value="UniProtKB-SubCell"/>
</dbReference>
<dbReference type="GO" id="GO:0019135">
    <property type="term" value="F:deoxyhypusine monooxygenase activity"/>
    <property type="evidence" value="ECO:0000318"/>
    <property type="project" value="GO_Central"/>
</dbReference>
<dbReference type="GO" id="GO:0046872">
    <property type="term" value="F:metal ion binding"/>
    <property type="evidence" value="ECO:0007669"/>
    <property type="project" value="UniProtKB-KW"/>
</dbReference>
<dbReference type="Gene3D" id="1.25.10.10">
    <property type="entry name" value="Leucine-rich Repeat Variant"/>
    <property type="match status" value="2"/>
</dbReference>
<dbReference type="HAMAP" id="MF_03101">
    <property type="entry name" value="Deoxyhypusine_hydroxylase"/>
    <property type="match status" value="1"/>
</dbReference>
<dbReference type="InterPro" id="IPR011989">
    <property type="entry name" value="ARM-like"/>
</dbReference>
<dbReference type="InterPro" id="IPR016024">
    <property type="entry name" value="ARM-type_fold"/>
</dbReference>
<dbReference type="InterPro" id="IPR027517">
    <property type="entry name" value="Deoxyhypusine_hydroxylase"/>
</dbReference>
<dbReference type="InterPro" id="IPR004155">
    <property type="entry name" value="PBS_lyase_HEAT"/>
</dbReference>
<dbReference type="PANTHER" id="PTHR12697:SF5">
    <property type="entry name" value="DEOXYHYPUSINE HYDROXYLASE"/>
    <property type="match status" value="1"/>
</dbReference>
<dbReference type="PANTHER" id="PTHR12697">
    <property type="entry name" value="PBS LYASE HEAT-LIKE PROTEIN"/>
    <property type="match status" value="1"/>
</dbReference>
<dbReference type="Pfam" id="PF13646">
    <property type="entry name" value="HEAT_2"/>
    <property type="match status" value="2"/>
</dbReference>
<dbReference type="SMART" id="SM00567">
    <property type="entry name" value="EZ_HEAT"/>
    <property type="match status" value="6"/>
</dbReference>
<dbReference type="SUPFAM" id="SSF48371">
    <property type="entry name" value="ARM repeat"/>
    <property type="match status" value="1"/>
</dbReference>